<keyword id="KW-0028">Amino-acid biosynthesis</keyword>
<keyword id="KW-0963">Cytoplasm</keyword>
<keyword id="KW-0368">Histidine biosynthesis</keyword>
<keyword id="KW-0413">Isomerase</keyword>
<evidence type="ECO:0000255" key="1">
    <source>
        <dbReference type="HAMAP-Rule" id="MF_01014"/>
    </source>
</evidence>
<protein>
    <recommendedName>
        <fullName evidence="1">1-(5-phosphoribosyl)-5-[(5-phosphoribosylamino)methylideneamino] imidazole-4-carboxamide isomerase</fullName>
        <ecNumber evidence="1">5.3.1.16</ecNumber>
    </recommendedName>
    <alternativeName>
        <fullName evidence="1">Phosphoribosylformimino-5-aminoimidazole carboxamide ribotide isomerase</fullName>
    </alternativeName>
</protein>
<accession>B5FDA3</accession>
<organism>
    <name type="scientific">Aliivibrio fischeri (strain MJ11)</name>
    <name type="common">Vibrio fischeri</name>
    <dbReference type="NCBI Taxonomy" id="388396"/>
    <lineage>
        <taxon>Bacteria</taxon>
        <taxon>Pseudomonadati</taxon>
        <taxon>Pseudomonadota</taxon>
        <taxon>Gammaproteobacteria</taxon>
        <taxon>Vibrionales</taxon>
        <taxon>Vibrionaceae</taxon>
        <taxon>Aliivibrio</taxon>
    </lineage>
</organism>
<dbReference type="EC" id="5.3.1.16" evidence="1"/>
<dbReference type="EMBL" id="CP001139">
    <property type="protein sequence ID" value="ACH65335.1"/>
    <property type="molecule type" value="Genomic_DNA"/>
</dbReference>
<dbReference type="RefSeq" id="WP_005418747.1">
    <property type="nucleotide sequence ID" value="NC_011184.1"/>
</dbReference>
<dbReference type="SMR" id="B5FDA3"/>
<dbReference type="GeneID" id="56274719"/>
<dbReference type="KEGG" id="vfm:VFMJ11_1100"/>
<dbReference type="HOGENOM" id="CLU_048577_1_2_6"/>
<dbReference type="UniPathway" id="UPA00031">
    <property type="reaction ID" value="UER00009"/>
</dbReference>
<dbReference type="Proteomes" id="UP000001857">
    <property type="component" value="Chromosome I"/>
</dbReference>
<dbReference type="GO" id="GO:0005737">
    <property type="term" value="C:cytoplasm"/>
    <property type="evidence" value="ECO:0007669"/>
    <property type="project" value="UniProtKB-SubCell"/>
</dbReference>
<dbReference type="GO" id="GO:0003949">
    <property type="term" value="F:1-(5-phosphoribosyl)-5-[(5-phosphoribosylamino)methylideneamino]imidazole-4-carboxamide isomerase activity"/>
    <property type="evidence" value="ECO:0007669"/>
    <property type="project" value="UniProtKB-UniRule"/>
</dbReference>
<dbReference type="GO" id="GO:0000105">
    <property type="term" value="P:L-histidine biosynthetic process"/>
    <property type="evidence" value="ECO:0007669"/>
    <property type="project" value="UniProtKB-UniRule"/>
</dbReference>
<dbReference type="GO" id="GO:0000162">
    <property type="term" value="P:L-tryptophan biosynthetic process"/>
    <property type="evidence" value="ECO:0007669"/>
    <property type="project" value="TreeGrafter"/>
</dbReference>
<dbReference type="CDD" id="cd04732">
    <property type="entry name" value="HisA"/>
    <property type="match status" value="1"/>
</dbReference>
<dbReference type="FunFam" id="3.20.20.70:FF:000009">
    <property type="entry name" value="1-(5-phosphoribosyl)-5-[(5-phosphoribosylamino)methylideneamino] imidazole-4-carboxamide isomerase"/>
    <property type="match status" value="1"/>
</dbReference>
<dbReference type="Gene3D" id="3.20.20.70">
    <property type="entry name" value="Aldolase class I"/>
    <property type="match status" value="1"/>
</dbReference>
<dbReference type="HAMAP" id="MF_01014">
    <property type="entry name" value="HisA"/>
    <property type="match status" value="1"/>
</dbReference>
<dbReference type="InterPro" id="IPR013785">
    <property type="entry name" value="Aldolase_TIM"/>
</dbReference>
<dbReference type="InterPro" id="IPR006062">
    <property type="entry name" value="His_biosynth"/>
</dbReference>
<dbReference type="InterPro" id="IPR006063">
    <property type="entry name" value="HisA_bact_arch"/>
</dbReference>
<dbReference type="InterPro" id="IPR044524">
    <property type="entry name" value="Isoase_HisA-like"/>
</dbReference>
<dbReference type="InterPro" id="IPR023016">
    <property type="entry name" value="Isoase_HisA-like_bact"/>
</dbReference>
<dbReference type="InterPro" id="IPR011060">
    <property type="entry name" value="RibuloseP-bd_barrel"/>
</dbReference>
<dbReference type="NCBIfam" id="TIGR00007">
    <property type="entry name" value="1-(5-phosphoribosyl)-5-[(5-phosphoribosylamino)methylideneamino]imidazole-4-carboxamide isomerase"/>
    <property type="match status" value="1"/>
</dbReference>
<dbReference type="PANTHER" id="PTHR43090">
    <property type="entry name" value="1-(5-PHOSPHORIBOSYL)-5-[(5-PHOSPHORIBOSYLAMINO)METHYLIDENEAMINO] IMIDAZOLE-4-CARBOXAMIDE ISOMERASE"/>
    <property type="match status" value="1"/>
</dbReference>
<dbReference type="PANTHER" id="PTHR43090:SF2">
    <property type="entry name" value="1-(5-PHOSPHORIBOSYL)-5-[(5-PHOSPHORIBOSYLAMINO)METHYLIDENEAMINO] IMIDAZOLE-4-CARBOXAMIDE ISOMERASE"/>
    <property type="match status" value="1"/>
</dbReference>
<dbReference type="Pfam" id="PF00977">
    <property type="entry name" value="His_biosynth"/>
    <property type="match status" value="1"/>
</dbReference>
<dbReference type="SUPFAM" id="SSF51366">
    <property type="entry name" value="Ribulose-phoshate binding barrel"/>
    <property type="match status" value="1"/>
</dbReference>
<comment type="catalytic activity">
    <reaction evidence="1">
        <text>1-(5-phospho-beta-D-ribosyl)-5-[(5-phospho-beta-D-ribosylamino)methylideneamino]imidazole-4-carboxamide = 5-[(5-phospho-1-deoxy-D-ribulos-1-ylimino)methylamino]-1-(5-phospho-beta-D-ribosyl)imidazole-4-carboxamide</text>
        <dbReference type="Rhea" id="RHEA:15469"/>
        <dbReference type="ChEBI" id="CHEBI:58435"/>
        <dbReference type="ChEBI" id="CHEBI:58525"/>
        <dbReference type="EC" id="5.3.1.16"/>
    </reaction>
</comment>
<comment type="pathway">
    <text evidence="1">Amino-acid biosynthesis; L-histidine biosynthesis; L-histidine from 5-phospho-alpha-D-ribose 1-diphosphate: step 4/9.</text>
</comment>
<comment type="subcellular location">
    <subcellularLocation>
        <location evidence="1">Cytoplasm</location>
    </subcellularLocation>
</comment>
<comment type="similarity">
    <text evidence="1">Belongs to the HisA/HisF family.</text>
</comment>
<name>HIS4_ALIFM</name>
<feature type="chain" id="PRO_1000190568" description="1-(5-phosphoribosyl)-5-[(5-phosphoribosylamino)methylideneamino] imidazole-4-carboxamide isomerase">
    <location>
        <begin position="1"/>
        <end position="245"/>
    </location>
</feature>
<feature type="active site" description="Proton acceptor" evidence="1">
    <location>
        <position position="7"/>
    </location>
</feature>
<feature type="active site" description="Proton donor" evidence="1">
    <location>
        <position position="129"/>
    </location>
</feature>
<gene>
    <name evidence="1" type="primary">hisA</name>
    <name type="ordered locus">VFMJ11_1100</name>
</gene>
<proteinExistence type="inferred from homology"/>
<reference key="1">
    <citation type="submission" date="2008-08" db="EMBL/GenBank/DDBJ databases">
        <title>Complete sequence of Vibrio fischeri strain MJ11.</title>
        <authorList>
            <person name="Mandel M.J."/>
            <person name="Stabb E.V."/>
            <person name="Ruby E.G."/>
            <person name="Ferriera S."/>
            <person name="Johnson J."/>
            <person name="Kravitz S."/>
            <person name="Beeson K."/>
            <person name="Sutton G."/>
            <person name="Rogers Y.-H."/>
            <person name="Friedman R."/>
            <person name="Frazier M."/>
            <person name="Venter J.C."/>
        </authorList>
    </citation>
    <scope>NUCLEOTIDE SEQUENCE [LARGE SCALE GENOMIC DNA]</scope>
    <source>
        <strain>MJ11</strain>
    </source>
</reference>
<sequence length="245" mass="26418">MIIPALDLIEGQVVRLFQGDYGQVTEYKVDPAEQFNLYHQAGANWLHLVDLTGAKDTTARQLDLIARLLASTPANIQIGGGVRNEADVQDLLNAGAQRVVVGSTAVKQPELVKGWMEKYGAEKIVLALDINIDENGTRNVAISGWQEDSGVTIEALLEDYLTVGLKHVLCTDISRDGTLQGSNVELYVDLCKQYPQVQFQSSGGIGSLDDIAALKGSGVAGVIVGRALLDGKFTAEEAFQCWQSE</sequence>